<feature type="chain" id="PRO_0000174190" description="Small ribosomal subunit protein eS7">
    <location>
        <begin position="1"/>
        <end position="194"/>
    </location>
</feature>
<feature type="modified residue" description="N-acetylmethionine" evidence="16">
    <location>
        <position position="1"/>
    </location>
</feature>
<feature type="modified residue" description="N6-acetyllysine; alternate" evidence="15">
    <location>
        <position position="74"/>
    </location>
</feature>
<feature type="cross-link" description="Glycyl lysine isopeptide (Lys-Gly) (interchain with G-Cter in SUMO2)" evidence="17">
    <location>
        <position position="70"/>
    </location>
</feature>
<feature type="cross-link" description="Glycyl lysine isopeptide (Lys-Gly) (interchain with G-Cter in SUMO2); alternate" evidence="17">
    <location>
        <position position="74"/>
    </location>
</feature>
<feature type="strand" evidence="23">
    <location>
        <begin position="13"/>
        <end position="15"/>
    </location>
</feature>
<feature type="turn" evidence="23">
    <location>
        <begin position="18"/>
        <end position="21"/>
    </location>
</feature>
<feature type="turn" evidence="23">
    <location>
        <begin position="23"/>
        <end position="28"/>
    </location>
</feature>
<feature type="helix" evidence="18">
    <location>
        <begin position="30"/>
        <end position="33"/>
    </location>
</feature>
<feature type="turn" evidence="23">
    <location>
        <begin position="34"/>
        <end position="37"/>
    </location>
</feature>
<feature type="strand" evidence="21">
    <location>
        <begin position="40"/>
        <end position="42"/>
    </location>
</feature>
<feature type="strand" evidence="23">
    <location>
        <begin position="46"/>
        <end position="49"/>
    </location>
</feature>
<feature type="turn" evidence="23">
    <location>
        <begin position="54"/>
        <end position="56"/>
    </location>
</feature>
<feature type="strand" evidence="23">
    <location>
        <begin position="57"/>
        <end position="64"/>
    </location>
</feature>
<feature type="helix" evidence="22">
    <location>
        <begin position="66"/>
        <end position="68"/>
    </location>
</feature>
<feature type="helix" evidence="23">
    <location>
        <begin position="69"/>
        <end position="86"/>
    </location>
</feature>
<feature type="turn" evidence="23">
    <location>
        <begin position="87"/>
        <end position="89"/>
    </location>
</feature>
<feature type="strand" evidence="23">
    <location>
        <begin position="91"/>
        <end position="96"/>
    </location>
</feature>
<feature type="helix" evidence="24">
    <location>
        <begin position="106"/>
        <end position="108"/>
    </location>
</feature>
<feature type="helix" evidence="19">
    <location>
        <begin position="110"/>
        <end position="112"/>
    </location>
</feature>
<feature type="helix" evidence="23">
    <location>
        <begin position="118"/>
        <end position="120"/>
    </location>
</feature>
<feature type="helix" evidence="23">
    <location>
        <begin position="122"/>
        <end position="133"/>
    </location>
</feature>
<feature type="turn" evidence="23">
    <location>
        <begin position="134"/>
        <end position="136"/>
    </location>
</feature>
<feature type="strand" evidence="23">
    <location>
        <begin position="139"/>
        <end position="146"/>
    </location>
</feature>
<feature type="strand" evidence="20">
    <location>
        <begin position="148"/>
        <end position="150"/>
    </location>
</feature>
<feature type="strand" evidence="23">
    <location>
        <begin position="152"/>
        <end position="158"/>
    </location>
</feature>
<feature type="helix" evidence="23">
    <location>
        <begin position="160"/>
        <end position="162"/>
    </location>
</feature>
<feature type="helix" evidence="23">
    <location>
        <begin position="163"/>
        <end position="166"/>
    </location>
</feature>
<feature type="helix" evidence="23">
    <location>
        <begin position="167"/>
        <end position="169"/>
    </location>
</feature>
<feature type="helix" evidence="23">
    <location>
        <begin position="170"/>
        <end position="181"/>
    </location>
</feature>
<feature type="strand" evidence="23">
    <location>
        <begin position="184"/>
        <end position="188"/>
    </location>
</feature>
<reference key="1">
    <citation type="journal article" date="1995" name="Gene">
        <title>The human ribosomal protein S7-encoding gene: isolation, structure and localization in 2p25.</title>
        <authorList>
            <person name="Annilo T."/>
            <person name="Laan M."/>
            <person name="Stahl J."/>
            <person name="Metspalu A."/>
        </authorList>
    </citation>
    <scope>NUCLEOTIDE SEQUENCE [GENOMIC DNA / MRNA]</scope>
</reference>
<reference key="2">
    <citation type="journal article" date="2004" name="Nat. Genet.">
        <title>Complete sequencing and characterization of 21,243 full-length human cDNAs.</title>
        <authorList>
            <person name="Ota T."/>
            <person name="Suzuki Y."/>
            <person name="Nishikawa T."/>
            <person name="Otsuki T."/>
            <person name="Sugiyama T."/>
            <person name="Irie R."/>
            <person name="Wakamatsu A."/>
            <person name="Hayashi K."/>
            <person name="Sato H."/>
            <person name="Nagai K."/>
            <person name="Kimura K."/>
            <person name="Makita H."/>
            <person name="Sekine M."/>
            <person name="Obayashi M."/>
            <person name="Nishi T."/>
            <person name="Shibahara T."/>
            <person name="Tanaka T."/>
            <person name="Ishii S."/>
            <person name="Yamamoto J."/>
            <person name="Saito K."/>
            <person name="Kawai Y."/>
            <person name="Isono Y."/>
            <person name="Nakamura Y."/>
            <person name="Nagahari K."/>
            <person name="Murakami K."/>
            <person name="Yasuda T."/>
            <person name="Iwayanagi T."/>
            <person name="Wagatsuma M."/>
            <person name="Shiratori A."/>
            <person name="Sudo H."/>
            <person name="Hosoiri T."/>
            <person name="Kaku Y."/>
            <person name="Kodaira H."/>
            <person name="Kondo H."/>
            <person name="Sugawara M."/>
            <person name="Takahashi M."/>
            <person name="Kanda K."/>
            <person name="Yokoi T."/>
            <person name="Furuya T."/>
            <person name="Kikkawa E."/>
            <person name="Omura Y."/>
            <person name="Abe K."/>
            <person name="Kamihara K."/>
            <person name="Katsuta N."/>
            <person name="Sato K."/>
            <person name="Tanikawa M."/>
            <person name="Yamazaki M."/>
            <person name="Ninomiya K."/>
            <person name="Ishibashi T."/>
            <person name="Yamashita H."/>
            <person name="Murakawa K."/>
            <person name="Fujimori K."/>
            <person name="Tanai H."/>
            <person name="Kimata M."/>
            <person name="Watanabe M."/>
            <person name="Hiraoka S."/>
            <person name="Chiba Y."/>
            <person name="Ishida S."/>
            <person name="Ono Y."/>
            <person name="Takiguchi S."/>
            <person name="Watanabe S."/>
            <person name="Yosida M."/>
            <person name="Hotuta T."/>
            <person name="Kusano J."/>
            <person name="Kanehori K."/>
            <person name="Takahashi-Fujii A."/>
            <person name="Hara H."/>
            <person name="Tanase T.-O."/>
            <person name="Nomura Y."/>
            <person name="Togiya S."/>
            <person name="Komai F."/>
            <person name="Hara R."/>
            <person name="Takeuchi K."/>
            <person name="Arita M."/>
            <person name="Imose N."/>
            <person name="Musashino K."/>
            <person name="Yuuki H."/>
            <person name="Oshima A."/>
            <person name="Sasaki N."/>
            <person name="Aotsuka S."/>
            <person name="Yoshikawa Y."/>
            <person name="Matsunawa H."/>
            <person name="Ichihara T."/>
            <person name="Shiohata N."/>
            <person name="Sano S."/>
            <person name="Moriya S."/>
            <person name="Momiyama H."/>
            <person name="Satoh N."/>
            <person name="Takami S."/>
            <person name="Terashima Y."/>
            <person name="Suzuki O."/>
            <person name="Nakagawa S."/>
            <person name="Senoh A."/>
            <person name="Mizoguchi H."/>
            <person name="Goto Y."/>
            <person name="Shimizu F."/>
            <person name="Wakebe H."/>
            <person name="Hishigaki H."/>
            <person name="Watanabe T."/>
            <person name="Sugiyama A."/>
            <person name="Takemoto M."/>
            <person name="Kawakami B."/>
            <person name="Yamazaki M."/>
            <person name="Watanabe K."/>
            <person name="Kumagai A."/>
            <person name="Itakura S."/>
            <person name="Fukuzumi Y."/>
            <person name="Fujimori Y."/>
            <person name="Komiyama M."/>
            <person name="Tashiro H."/>
            <person name="Tanigami A."/>
            <person name="Fujiwara T."/>
            <person name="Ono T."/>
            <person name="Yamada K."/>
            <person name="Fujii Y."/>
            <person name="Ozaki K."/>
            <person name="Hirao M."/>
            <person name="Ohmori Y."/>
            <person name="Kawabata A."/>
            <person name="Hikiji T."/>
            <person name="Kobatake N."/>
            <person name="Inagaki H."/>
            <person name="Ikema Y."/>
            <person name="Okamoto S."/>
            <person name="Okitani R."/>
            <person name="Kawakami T."/>
            <person name="Noguchi S."/>
            <person name="Itoh T."/>
            <person name="Shigeta K."/>
            <person name="Senba T."/>
            <person name="Matsumura K."/>
            <person name="Nakajima Y."/>
            <person name="Mizuno T."/>
            <person name="Morinaga M."/>
            <person name="Sasaki M."/>
            <person name="Togashi T."/>
            <person name="Oyama M."/>
            <person name="Hata H."/>
            <person name="Watanabe M."/>
            <person name="Komatsu T."/>
            <person name="Mizushima-Sugano J."/>
            <person name="Satoh T."/>
            <person name="Shirai Y."/>
            <person name="Takahashi Y."/>
            <person name="Nakagawa K."/>
            <person name="Okumura K."/>
            <person name="Nagase T."/>
            <person name="Nomura N."/>
            <person name="Kikuchi H."/>
            <person name="Masuho Y."/>
            <person name="Yamashita R."/>
            <person name="Nakai K."/>
            <person name="Yada T."/>
            <person name="Nakamura Y."/>
            <person name="Ohara O."/>
            <person name="Isogai T."/>
            <person name="Sugano S."/>
        </authorList>
    </citation>
    <scope>NUCLEOTIDE SEQUENCE [LARGE SCALE MRNA]</scope>
    <source>
        <tissue>Spleen</tissue>
    </source>
</reference>
<reference key="3">
    <citation type="journal article" date="2005" name="Nature">
        <title>Generation and annotation of the DNA sequences of human chromosomes 2 and 4.</title>
        <authorList>
            <person name="Hillier L.W."/>
            <person name="Graves T.A."/>
            <person name="Fulton R.S."/>
            <person name="Fulton L.A."/>
            <person name="Pepin K.H."/>
            <person name="Minx P."/>
            <person name="Wagner-McPherson C."/>
            <person name="Layman D."/>
            <person name="Wylie K."/>
            <person name="Sekhon M."/>
            <person name="Becker M.C."/>
            <person name="Fewell G.A."/>
            <person name="Delehaunty K.D."/>
            <person name="Miner T.L."/>
            <person name="Nash W.E."/>
            <person name="Kremitzki C."/>
            <person name="Oddy L."/>
            <person name="Du H."/>
            <person name="Sun H."/>
            <person name="Bradshaw-Cordum H."/>
            <person name="Ali J."/>
            <person name="Carter J."/>
            <person name="Cordes M."/>
            <person name="Harris A."/>
            <person name="Isak A."/>
            <person name="van Brunt A."/>
            <person name="Nguyen C."/>
            <person name="Du F."/>
            <person name="Courtney L."/>
            <person name="Kalicki J."/>
            <person name="Ozersky P."/>
            <person name="Abbott S."/>
            <person name="Armstrong J."/>
            <person name="Belter E.A."/>
            <person name="Caruso L."/>
            <person name="Cedroni M."/>
            <person name="Cotton M."/>
            <person name="Davidson T."/>
            <person name="Desai A."/>
            <person name="Elliott G."/>
            <person name="Erb T."/>
            <person name="Fronick C."/>
            <person name="Gaige T."/>
            <person name="Haakenson W."/>
            <person name="Haglund K."/>
            <person name="Holmes A."/>
            <person name="Harkins R."/>
            <person name="Kim K."/>
            <person name="Kruchowski S.S."/>
            <person name="Strong C.M."/>
            <person name="Grewal N."/>
            <person name="Goyea E."/>
            <person name="Hou S."/>
            <person name="Levy A."/>
            <person name="Martinka S."/>
            <person name="Mead K."/>
            <person name="McLellan M.D."/>
            <person name="Meyer R."/>
            <person name="Randall-Maher J."/>
            <person name="Tomlinson C."/>
            <person name="Dauphin-Kohlberg S."/>
            <person name="Kozlowicz-Reilly A."/>
            <person name="Shah N."/>
            <person name="Swearengen-Shahid S."/>
            <person name="Snider J."/>
            <person name="Strong J.T."/>
            <person name="Thompson J."/>
            <person name="Yoakum M."/>
            <person name="Leonard S."/>
            <person name="Pearman C."/>
            <person name="Trani L."/>
            <person name="Radionenko M."/>
            <person name="Waligorski J.E."/>
            <person name="Wang C."/>
            <person name="Rock S.M."/>
            <person name="Tin-Wollam A.-M."/>
            <person name="Maupin R."/>
            <person name="Latreille P."/>
            <person name="Wendl M.C."/>
            <person name="Yang S.-P."/>
            <person name="Pohl C."/>
            <person name="Wallis J.W."/>
            <person name="Spieth J."/>
            <person name="Bieri T.A."/>
            <person name="Berkowicz N."/>
            <person name="Nelson J.O."/>
            <person name="Osborne J."/>
            <person name="Ding L."/>
            <person name="Meyer R."/>
            <person name="Sabo A."/>
            <person name="Shotland Y."/>
            <person name="Sinha P."/>
            <person name="Wohldmann P.E."/>
            <person name="Cook L.L."/>
            <person name="Hickenbotham M.T."/>
            <person name="Eldred J."/>
            <person name="Williams D."/>
            <person name="Jones T.A."/>
            <person name="She X."/>
            <person name="Ciccarelli F.D."/>
            <person name="Izaurralde E."/>
            <person name="Taylor J."/>
            <person name="Schmutz J."/>
            <person name="Myers R.M."/>
            <person name="Cox D.R."/>
            <person name="Huang X."/>
            <person name="McPherson J.D."/>
            <person name="Mardis E.R."/>
            <person name="Clifton S.W."/>
            <person name="Warren W.C."/>
            <person name="Chinwalla A.T."/>
            <person name="Eddy S.R."/>
            <person name="Marra M.A."/>
            <person name="Ovcharenko I."/>
            <person name="Furey T.S."/>
            <person name="Miller W."/>
            <person name="Eichler E.E."/>
            <person name="Bork P."/>
            <person name="Suyama M."/>
            <person name="Torrents D."/>
            <person name="Waterston R.H."/>
            <person name="Wilson R.K."/>
        </authorList>
    </citation>
    <scope>NUCLEOTIDE SEQUENCE [LARGE SCALE GENOMIC DNA]</scope>
</reference>
<reference key="4">
    <citation type="submission" date="2005-09" db="EMBL/GenBank/DDBJ databases">
        <authorList>
            <person name="Mural R.J."/>
            <person name="Istrail S."/>
            <person name="Sutton G."/>
            <person name="Florea L."/>
            <person name="Halpern A.L."/>
            <person name="Mobarry C.M."/>
            <person name="Lippert R."/>
            <person name="Walenz B."/>
            <person name="Shatkay H."/>
            <person name="Dew I."/>
            <person name="Miller J.R."/>
            <person name="Flanigan M.J."/>
            <person name="Edwards N.J."/>
            <person name="Bolanos R."/>
            <person name="Fasulo D."/>
            <person name="Halldorsson B.V."/>
            <person name="Hannenhalli S."/>
            <person name="Turner R."/>
            <person name="Yooseph S."/>
            <person name="Lu F."/>
            <person name="Nusskern D.R."/>
            <person name="Shue B.C."/>
            <person name="Zheng X.H."/>
            <person name="Zhong F."/>
            <person name="Delcher A.L."/>
            <person name="Huson D.H."/>
            <person name="Kravitz S.A."/>
            <person name="Mouchard L."/>
            <person name="Reinert K."/>
            <person name="Remington K.A."/>
            <person name="Clark A.G."/>
            <person name="Waterman M.S."/>
            <person name="Eichler E.E."/>
            <person name="Adams M.D."/>
            <person name="Hunkapiller M.W."/>
            <person name="Myers E.W."/>
            <person name="Venter J.C."/>
        </authorList>
    </citation>
    <scope>NUCLEOTIDE SEQUENCE [LARGE SCALE GENOMIC DNA]</scope>
</reference>
<reference key="5">
    <citation type="journal article" date="2004" name="Genome Res.">
        <title>The status, quality, and expansion of the NIH full-length cDNA project: the Mammalian Gene Collection (MGC).</title>
        <authorList>
            <consortium name="The MGC Project Team"/>
        </authorList>
    </citation>
    <scope>NUCLEOTIDE SEQUENCE [LARGE SCALE MRNA]</scope>
    <source>
        <tissue>Brain</tissue>
        <tissue>Liver</tissue>
        <tissue>Lung</tissue>
    </source>
</reference>
<reference key="6">
    <citation type="journal article" date="1996" name="Eur. J. Biochem.">
        <title>Characterization of the human small-ribosomal-subunit proteins by N-terminal and internal sequencing, and mass spectrometry.</title>
        <authorList>
            <person name="Vladimirov S.N."/>
            <person name="Ivanov A.V."/>
            <person name="Karpova G.G."/>
            <person name="Musolyamov A.K."/>
            <person name="Egorov T.A."/>
            <person name="Thiede B."/>
            <person name="Wittmann-Liebold B."/>
            <person name="Otto A."/>
        </authorList>
    </citation>
    <scope>PROTEIN SEQUENCE OF 170-177</scope>
    <source>
        <tissue>Placenta</tissue>
    </source>
</reference>
<reference key="7">
    <citation type="journal article" date="1998" name="EMBO J.">
        <title>Importin beta, transportin, RanBP5 and RanBP7 mediate nuclear import of ribosomal proteins in mammalian cells.</title>
        <authorList>
            <person name="Jaekel S."/>
            <person name="Goerlich D."/>
        </authorList>
    </citation>
    <scope>INTERACTION WITH IPO5; IPO7 AND KPNB1</scope>
    <scope>SUBCELLULAR LOCATION</scope>
</reference>
<reference key="8">
    <citation type="journal article" date="2002" name="EMBO J.">
        <title>Importins fulfill a dual function as nuclear import receptors and cytoplasmic chaperones for exposed basic domains.</title>
        <authorList>
            <person name="Jaekel S."/>
            <person name="Mingot J.-M."/>
            <person name="Schwarzmaier P."/>
            <person name="Hartmann E."/>
            <person name="Goerlich D."/>
        </authorList>
    </citation>
    <scope>INTERACTION WITH IPO9</scope>
</reference>
<reference key="9">
    <citation type="journal article" date="2003" name="Nature">
        <title>Proteomic characterization of the human centrosome by protein correlation profiling.</title>
        <authorList>
            <person name="Andersen J.S."/>
            <person name="Wilkinson C.J."/>
            <person name="Mayor T."/>
            <person name="Mortensen P."/>
            <person name="Nigg E.A."/>
            <person name="Mann M."/>
        </authorList>
    </citation>
    <scope>IDENTIFICATION BY MASS SPECTROMETRY</scope>
    <scope>SUBCELLULAR LOCATION [LARGE SCALE ANALYSIS]</scope>
    <source>
        <tissue>Lymphoblast</tissue>
    </source>
</reference>
<reference key="10">
    <citation type="journal article" date="2008" name="Am. J. Hum. Genet.">
        <title>Ribosomal protein L5 and L11 mutations are associated with cleft palate and abnormal thumbs in Diamond-Blackfan anemia patients.</title>
        <authorList>
            <person name="Gazda H.T."/>
            <person name="Sheen M.R."/>
            <person name="Vlachos A."/>
            <person name="Choesmel V."/>
            <person name="O'Donohue M.-F."/>
            <person name="Schneider H."/>
            <person name="Darras N."/>
            <person name="Hasman C."/>
            <person name="Sieff C.A."/>
            <person name="Newburger P.E."/>
            <person name="Ball S.E."/>
            <person name="Niewiadomska E."/>
            <person name="Matysiak M."/>
            <person name="Zaucha J.M."/>
            <person name="Glader B."/>
            <person name="Niemeyer C."/>
            <person name="Meerpohl J.J."/>
            <person name="Atsidaftos E."/>
            <person name="Lipton J.M."/>
            <person name="Gleizes P.-E."/>
            <person name="Beggs A.H."/>
        </authorList>
    </citation>
    <scope>FUNCTION</scope>
    <scope>INVOLVEMENT IN DBA8</scope>
</reference>
<reference key="11">
    <citation type="journal article" date="2008" name="Proc. Natl. Acad. Sci. U.S.A.">
        <title>A quantitative atlas of mitotic phosphorylation.</title>
        <authorList>
            <person name="Dephoure N."/>
            <person name="Zhou C."/>
            <person name="Villen J."/>
            <person name="Beausoleil S.A."/>
            <person name="Bakalarski C.E."/>
            <person name="Elledge S.J."/>
            <person name="Gygi S.P."/>
        </authorList>
    </citation>
    <scope>IDENTIFICATION BY MASS SPECTROMETRY [LARGE SCALE ANALYSIS]</scope>
    <source>
        <tissue>Cervix carcinoma</tissue>
    </source>
</reference>
<reference key="12">
    <citation type="journal article" date="2009" name="Sci. Signal.">
        <title>Quantitative phosphoproteomic analysis of T cell receptor signaling reveals system-wide modulation of protein-protein interactions.</title>
        <authorList>
            <person name="Mayya V."/>
            <person name="Lundgren D.H."/>
            <person name="Hwang S.-I."/>
            <person name="Rezaul K."/>
            <person name="Wu L."/>
            <person name="Eng J.K."/>
            <person name="Rodionov V."/>
            <person name="Han D.K."/>
        </authorList>
    </citation>
    <scope>IDENTIFICATION BY MASS SPECTROMETRY [LARGE SCALE ANALYSIS]</scope>
    <source>
        <tissue>Leukemic T-cell</tissue>
    </source>
</reference>
<reference key="13">
    <citation type="journal article" date="2009" name="Science">
        <title>Lysine acetylation targets protein complexes and co-regulates major cellular functions.</title>
        <authorList>
            <person name="Choudhary C."/>
            <person name="Kumar C."/>
            <person name="Gnad F."/>
            <person name="Nielsen M.L."/>
            <person name="Rehman M."/>
            <person name="Walther T.C."/>
            <person name="Olsen J.V."/>
            <person name="Mann M."/>
        </authorList>
    </citation>
    <scope>ACETYLATION [LARGE SCALE ANALYSIS] AT LYS-74</scope>
    <scope>IDENTIFICATION BY MASS SPECTROMETRY [LARGE SCALE ANALYSIS]</scope>
</reference>
<reference key="14">
    <citation type="journal article" date="2010" name="J. Proteome Res.">
        <title>Characterization of hNek6 interactome reveals an important role for its short N-terminal domain and colocalization with proteins at the centrosome.</title>
        <authorList>
            <person name="Vaz Meirelles G."/>
            <person name="Ferreira Lanza D.C."/>
            <person name="da Silva J.C."/>
            <person name="Santana Bernachi J."/>
            <person name="Paes Leme A.F."/>
            <person name="Kobarg J."/>
        </authorList>
    </citation>
    <scope>SUBCELLULAR LOCATION</scope>
    <scope>INTERACTION WITH NEK6</scope>
    <scope>PHOSPHORYLATION BY NEK6</scope>
</reference>
<reference key="15">
    <citation type="journal article" date="2010" name="Sci. Signal.">
        <title>Quantitative phosphoproteomics reveals widespread full phosphorylation site occupancy during mitosis.</title>
        <authorList>
            <person name="Olsen J.V."/>
            <person name="Vermeulen M."/>
            <person name="Santamaria A."/>
            <person name="Kumar C."/>
            <person name="Miller M.L."/>
            <person name="Jensen L.J."/>
            <person name="Gnad F."/>
            <person name="Cox J."/>
            <person name="Jensen T.S."/>
            <person name="Nigg E.A."/>
            <person name="Brunak S."/>
            <person name="Mann M."/>
        </authorList>
    </citation>
    <scope>IDENTIFICATION BY MASS SPECTROMETRY [LARGE SCALE ANALYSIS]</scope>
    <source>
        <tissue>Cervix carcinoma</tissue>
    </source>
</reference>
<reference key="16">
    <citation type="journal article" date="2011" name="BMC Syst. Biol.">
        <title>Initial characterization of the human central proteome.</title>
        <authorList>
            <person name="Burkard T.R."/>
            <person name="Planyavsky M."/>
            <person name="Kaupe I."/>
            <person name="Breitwieser F.P."/>
            <person name="Buerckstuemmer T."/>
            <person name="Bennett K.L."/>
            <person name="Superti-Furga G."/>
            <person name="Colinge J."/>
        </authorList>
    </citation>
    <scope>IDENTIFICATION BY MASS SPECTROMETRY [LARGE SCALE ANALYSIS]</scope>
</reference>
<reference key="17">
    <citation type="journal article" date="2011" name="Sci. Signal.">
        <title>System-wide temporal characterization of the proteome and phosphoproteome of human embryonic stem cell differentiation.</title>
        <authorList>
            <person name="Rigbolt K.T."/>
            <person name="Prokhorova T.A."/>
            <person name="Akimov V."/>
            <person name="Henningsen J."/>
            <person name="Johansen P.T."/>
            <person name="Kratchmarova I."/>
            <person name="Kassem M."/>
            <person name="Mann M."/>
            <person name="Olsen J.V."/>
            <person name="Blagoev B."/>
        </authorList>
    </citation>
    <scope>IDENTIFICATION BY MASS SPECTROMETRY [LARGE SCALE ANALYSIS]</scope>
</reference>
<reference key="18">
    <citation type="journal article" date="2014" name="Curr. Opin. Struct. Biol.">
        <title>A new system for naming ribosomal proteins.</title>
        <authorList>
            <person name="Ban N."/>
            <person name="Beckmann R."/>
            <person name="Cate J.H.D."/>
            <person name="Dinman J.D."/>
            <person name="Dragon F."/>
            <person name="Ellis S.R."/>
            <person name="Lafontaine D.L.J."/>
            <person name="Lindahl L."/>
            <person name="Liljas A."/>
            <person name="Lipton J.M."/>
            <person name="McAlear M.A."/>
            <person name="Moore P.B."/>
            <person name="Noller H.F."/>
            <person name="Ortega J."/>
            <person name="Panse V.G."/>
            <person name="Ramakrishnan V."/>
            <person name="Spahn C.M.T."/>
            <person name="Steitz T.A."/>
            <person name="Tchorzewski M."/>
            <person name="Tollervey D."/>
            <person name="Warren A.J."/>
            <person name="Williamson J.R."/>
            <person name="Wilson D."/>
            <person name="Yonath A."/>
            <person name="Yusupov M."/>
        </authorList>
    </citation>
    <scope>NOMENCLATURE</scope>
</reference>
<reference key="19">
    <citation type="journal article" date="2014" name="J. Proteomics">
        <title>An enzyme assisted RP-RPLC approach for in-depth analysis of human liver phosphoproteome.</title>
        <authorList>
            <person name="Bian Y."/>
            <person name="Song C."/>
            <person name="Cheng K."/>
            <person name="Dong M."/>
            <person name="Wang F."/>
            <person name="Huang J."/>
            <person name="Sun D."/>
            <person name="Wang L."/>
            <person name="Ye M."/>
            <person name="Zou H."/>
        </authorList>
    </citation>
    <scope>IDENTIFICATION BY MASS SPECTROMETRY [LARGE SCALE ANALYSIS]</scope>
    <source>
        <tissue>Liver</tissue>
    </source>
</reference>
<reference key="20">
    <citation type="journal article" date="2015" name="Proteomics">
        <title>N-terminome analysis of the human mitochondrial proteome.</title>
        <authorList>
            <person name="Vaca Jacome A.S."/>
            <person name="Rabilloud T."/>
            <person name="Schaeffer-Reiss C."/>
            <person name="Rompais M."/>
            <person name="Ayoub D."/>
            <person name="Lane L."/>
            <person name="Bairoch A."/>
            <person name="Van Dorsselaer A."/>
            <person name="Carapito C."/>
        </authorList>
    </citation>
    <scope>ACETYLATION [LARGE SCALE ANALYSIS] AT MET-1</scope>
    <scope>IDENTIFICATION BY MASS SPECTROMETRY [LARGE SCALE ANALYSIS]</scope>
</reference>
<reference key="21">
    <citation type="journal article" date="2017" name="Nat. Struct. Mol. Biol.">
        <title>Site-specific mapping of the human SUMO proteome reveals co-modification with phosphorylation.</title>
        <authorList>
            <person name="Hendriks I.A."/>
            <person name="Lyon D."/>
            <person name="Young C."/>
            <person name="Jensen L.J."/>
            <person name="Vertegaal A.C."/>
            <person name="Nielsen M.L."/>
        </authorList>
    </citation>
    <scope>SUMOYLATION [LARGE SCALE ANALYSIS] AT LYS-70 AND LYS-74</scope>
    <scope>IDENTIFICATION BY MASS SPECTROMETRY [LARGE SCALE ANALYSIS]</scope>
</reference>
<reference key="22">
    <citation type="journal article" date="2013" name="Nature">
        <title>Structures of the human and Drosophila 80S ribosome.</title>
        <authorList>
            <person name="Anger A.M."/>
            <person name="Armache J.P."/>
            <person name="Berninghausen O."/>
            <person name="Habeck M."/>
            <person name="Subklewe M."/>
            <person name="Wilson D.N."/>
            <person name="Beckmann R."/>
        </authorList>
    </citation>
    <scope>STRUCTURE BY ELECTRON MICROSCOPY (5.0 ANGSTROMS) OF 80S RIBOSOME</scope>
    <scope>FUNCTION</scope>
    <scope>SUBUNIT</scope>
    <scope>SUBCELLULAR LOCATION</scope>
</reference>
<reference key="23">
    <citation type="journal article" date="2017" name="Biochem. Biophys. Res. Commun.">
        <title>PPPDE1 is a novel deubiquitinase belonging to a cysteine isopeptidase family.</title>
        <authorList>
            <person name="Xie X."/>
            <person name="Wang X."/>
            <person name="Jiang D."/>
            <person name="Wang J."/>
            <person name="Fei R."/>
            <person name="Cong X."/>
            <person name="Wei L."/>
            <person name="Wang Y."/>
            <person name="Chen H."/>
        </authorList>
    </citation>
    <scope>INTERACTION WITH DESI2</scope>
    <scope>DEUBIQUITINATION BY DESI2</scope>
</reference>
<reference evidence="12 13 14" key="24">
    <citation type="journal article" date="2021" name="Science">
        <title>Nucleolar maturation of the human small subunit processome.</title>
        <authorList>
            <person name="Singh S."/>
            <person name="Vanden Broeck A."/>
            <person name="Miller L."/>
            <person name="Chaker-Margot M."/>
            <person name="Klinge S."/>
        </authorList>
    </citation>
    <scope>STRUCTURE BY ELECTRON MICROSCOPY (2.70 ANGSTROMS)</scope>
    <scope>FUNCTION</scope>
    <scope>SUBUNIT</scope>
    <scope>SUBCELLULAR LOCATION</scope>
</reference>
<gene>
    <name evidence="11" type="primary">RPS7</name>
</gene>
<organism>
    <name type="scientific">Homo sapiens</name>
    <name type="common">Human</name>
    <dbReference type="NCBI Taxonomy" id="9606"/>
    <lineage>
        <taxon>Eukaryota</taxon>
        <taxon>Metazoa</taxon>
        <taxon>Chordata</taxon>
        <taxon>Craniata</taxon>
        <taxon>Vertebrata</taxon>
        <taxon>Euteleostomi</taxon>
        <taxon>Mammalia</taxon>
        <taxon>Eutheria</taxon>
        <taxon>Euarchontoglires</taxon>
        <taxon>Primates</taxon>
        <taxon>Haplorrhini</taxon>
        <taxon>Catarrhini</taxon>
        <taxon>Hominidae</taxon>
        <taxon>Homo</taxon>
    </lineage>
</organism>
<dbReference type="EMBL" id="M77233">
    <property type="protein sequence ID" value="AAB00969.1"/>
    <property type="molecule type" value="mRNA"/>
</dbReference>
<dbReference type="EMBL" id="Z25749">
    <property type="protein sequence ID" value="CAA81022.1"/>
    <property type="molecule type" value="Genomic_DNA"/>
</dbReference>
<dbReference type="EMBL" id="AK311794">
    <property type="protein sequence ID" value="BAG34737.1"/>
    <property type="molecule type" value="mRNA"/>
</dbReference>
<dbReference type="EMBL" id="AC108488">
    <property type="protein sequence ID" value="AAX82027.1"/>
    <property type="molecule type" value="Genomic_DNA"/>
</dbReference>
<dbReference type="EMBL" id="CH471053">
    <property type="protein sequence ID" value="EAX01057.1"/>
    <property type="molecule type" value="Genomic_DNA"/>
</dbReference>
<dbReference type="EMBL" id="CH471053">
    <property type="protein sequence ID" value="EAX01058.1"/>
    <property type="molecule type" value="Genomic_DNA"/>
</dbReference>
<dbReference type="EMBL" id="CH471053">
    <property type="protein sequence ID" value="EAX01059.1"/>
    <property type="molecule type" value="Genomic_DNA"/>
</dbReference>
<dbReference type="EMBL" id="BC002866">
    <property type="protein sequence ID" value="AAH02866.1"/>
    <property type="molecule type" value="mRNA"/>
</dbReference>
<dbReference type="EMBL" id="BC061901">
    <property type="protein sequence ID" value="AAH61901.1"/>
    <property type="molecule type" value="mRNA"/>
</dbReference>
<dbReference type="EMBL" id="BC071919">
    <property type="protein sequence ID" value="AAH71919.1"/>
    <property type="molecule type" value="mRNA"/>
</dbReference>
<dbReference type="CCDS" id="CCDS1648.1"/>
<dbReference type="PIR" id="JC4388">
    <property type="entry name" value="JC4388"/>
</dbReference>
<dbReference type="RefSeq" id="NP_001002.1">
    <property type="nucleotide sequence ID" value="NM_001011.4"/>
</dbReference>
<dbReference type="PDB" id="4UG0">
    <property type="method" value="EM"/>
    <property type="chains" value="SH=1-194"/>
</dbReference>
<dbReference type="PDB" id="4V6X">
    <property type="method" value="EM"/>
    <property type="resolution" value="5.00 A"/>
    <property type="chains" value="AH=1-194"/>
</dbReference>
<dbReference type="PDB" id="5A2Q">
    <property type="method" value="EM"/>
    <property type="resolution" value="3.90 A"/>
    <property type="chains" value="H=1-194"/>
</dbReference>
<dbReference type="PDB" id="5AJ0">
    <property type="method" value="EM"/>
    <property type="resolution" value="3.50 A"/>
    <property type="chains" value="BH=1-194"/>
</dbReference>
<dbReference type="PDB" id="5FLX">
    <property type="method" value="EM"/>
    <property type="resolution" value="3.90 A"/>
    <property type="chains" value="H=1-194"/>
</dbReference>
<dbReference type="PDB" id="5LKS">
    <property type="method" value="EM"/>
    <property type="resolution" value="3.60 A"/>
    <property type="chains" value="SH=1-194"/>
</dbReference>
<dbReference type="PDB" id="5OA3">
    <property type="method" value="EM"/>
    <property type="resolution" value="4.30 A"/>
    <property type="chains" value="H=1-194"/>
</dbReference>
<dbReference type="PDB" id="5T2C">
    <property type="method" value="EM"/>
    <property type="resolution" value="3.60 A"/>
    <property type="chains" value="At=1-194"/>
</dbReference>
<dbReference type="PDB" id="5VYC">
    <property type="method" value="X-ray"/>
    <property type="resolution" value="6.00 A"/>
    <property type="chains" value="H1/H2/H3/H4/H5/H6=1-194"/>
</dbReference>
<dbReference type="PDB" id="6FEC">
    <property type="method" value="EM"/>
    <property type="resolution" value="6.30 A"/>
    <property type="chains" value="X=5-194"/>
</dbReference>
<dbReference type="PDB" id="6G18">
    <property type="method" value="EM"/>
    <property type="resolution" value="3.60 A"/>
    <property type="chains" value="H=1-194"/>
</dbReference>
<dbReference type="PDB" id="6G4S">
    <property type="method" value="EM"/>
    <property type="resolution" value="4.00 A"/>
    <property type="chains" value="H=1-194"/>
</dbReference>
<dbReference type="PDB" id="6G4W">
    <property type="method" value="EM"/>
    <property type="resolution" value="4.50 A"/>
    <property type="chains" value="H=1-194"/>
</dbReference>
<dbReference type="PDB" id="6G51">
    <property type="method" value="EM"/>
    <property type="resolution" value="4.10 A"/>
    <property type="chains" value="H=1-194"/>
</dbReference>
<dbReference type="PDB" id="6G53">
    <property type="method" value="EM"/>
    <property type="resolution" value="4.50 A"/>
    <property type="chains" value="H=1-194"/>
</dbReference>
<dbReference type="PDB" id="6G5H">
    <property type="method" value="EM"/>
    <property type="resolution" value="3.60 A"/>
    <property type="chains" value="H=1-194"/>
</dbReference>
<dbReference type="PDB" id="6G5I">
    <property type="method" value="EM"/>
    <property type="resolution" value="3.50 A"/>
    <property type="chains" value="H=1-194"/>
</dbReference>
<dbReference type="PDB" id="6IP5">
    <property type="method" value="EM"/>
    <property type="resolution" value="3.90 A"/>
    <property type="chains" value="2s=1-194"/>
</dbReference>
<dbReference type="PDB" id="6IP6">
    <property type="method" value="EM"/>
    <property type="resolution" value="4.50 A"/>
    <property type="chains" value="2s=1-194"/>
</dbReference>
<dbReference type="PDB" id="6IP8">
    <property type="method" value="EM"/>
    <property type="resolution" value="3.90 A"/>
    <property type="chains" value="2s=1-194"/>
</dbReference>
<dbReference type="PDB" id="6OLE">
    <property type="method" value="EM"/>
    <property type="resolution" value="3.10 A"/>
    <property type="chains" value="SH=5-193"/>
</dbReference>
<dbReference type="PDB" id="6OLF">
    <property type="method" value="EM"/>
    <property type="resolution" value="3.90 A"/>
    <property type="chains" value="SH=5-193"/>
</dbReference>
<dbReference type="PDB" id="6OLG">
    <property type="method" value="EM"/>
    <property type="resolution" value="3.40 A"/>
    <property type="chains" value="BH=12-194"/>
</dbReference>
<dbReference type="PDB" id="6OLI">
    <property type="method" value="EM"/>
    <property type="resolution" value="3.50 A"/>
    <property type="chains" value="SH=5-193"/>
</dbReference>
<dbReference type="PDB" id="6OLZ">
    <property type="method" value="EM"/>
    <property type="resolution" value="3.90 A"/>
    <property type="chains" value="BH=12-194"/>
</dbReference>
<dbReference type="PDB" id="6OM0">
    <property type="method" value="EM"/>
    <property type="resolution" value="3.10 A"/>
    <property type="chains" value="SH=5-193"/>
</dbReference>
<dbReference type="PDB" id="6OM7">
    <property type="method" value="EM"/>
    <property type="resolution" value="3.70 A"/>
    <property type="chains" value="SH=5-193"/>
</dbReference>
<dbReference type="PDB" id="6QZP">
    <property type="method" value="EM"/>
    <property type="resolution" value="2.90 A"/>
    <property type="chains" value="SH=5-193"/>
</dbReference>
<dbReference type="PDB" id="6XA1">
    <property type="method" value="EM"/>
    <property type="resolution" value="2.80 A"/>
    <property type="chains" value="SH=6-194"/>
</dbReference>
<dbReference type="PDB" id="6Y0G">
    <property type="method" value="EM"/>
    <property type="resolution" value="3.20 A"/>
    <property type="chains" value="SH=1-194"/>
</dbReference>
<dbReference type="PDB" id="6Y2L">
    <property type="method" value="EM"/>
    <property type="resolution" value="3.00 A"/>
    <property type="chains" value="SH=1-194"/>
</dbReference>
<dbReference type="PDB" id="6Y57">
    <property type="method" value="EM"/>
    <property type="resolution" value="3.50 A"/>
    <property type="chains" value="SH=1-194"/>
</dbReference>
<dbReference type="PDB" id="6YBD">
    <property type="method" value="EM"/>
    <property type="resolution" value="3.30 A"/>
    <property type="chains" value="G=1-194"/>
</dbReference>
<dbReference type="PDB" id="6YBW">
    <property type="method" value="EM"/>
    <property type="resolution" value="3.10 A"/>
    <property type="chains" value="G=1-194"/>
</dbReference>
<dbReference type="PDB" id="6Z6L">
    <property type="method" value="EM"/>
    <property type="resolution" value="3.00 A"/>
    <property type="chains" value="SH=1-194"/>
</dbReference>
<dbReference type="PDB" id="6Z6M">
    <property type="method" value="EM"/>
    <property type="resolution" value="3.10 A"/>
    <property type="chains" value="SH=1-194"/>
</dbReference>
<dbReference type="PDB" id="6Z6N">
    <property type="method" value="EM"/>
    <property type="resolution" value="2.90 A"/>
    <property type="chains" value="SH=1-194"/>
</dbReference>
<dbReference type="PDB" id="6ZLW">
    <property type="method" value="EM"/>
    <property type="resolution" value="2.60 A"/>
    <property type="chains" value="H=1-194"/>
</dbReference>
<dbReference type="PDB" id="6ZM7">
    <property type="method" value="EM"/>
    <property type="resolution" value="2.70 A"/>
    <property type="chains" value="SH=1-194"/>
</dbReference>
<dbReference type="PDB" id="6ZME">
    <property type="method" value="EM"/>
    <property type="resolution" value="3.00 A"/>
    <property type="chains" value="SH=1-194"/>
</dbReference>
<dbReference type="PDB" id="6ZMI">
    <property type="method" value="EM"/>
    <property type="resolution" value="2.60 A"/>
    <property type="chains" value="SH=1-194"/>
</dbReference>
<dbReference type="PDB" id="6ZMO">
    <property type="method" value="EM"/>
    <property type="resolution" value="3.10 A"/>
    <property type="chains" value="SH=1-194"/>
</dbReference>
<dbReference type="PDB" id="6ZMT">
    <property type="method" value="EM"/>
    <property type="resolution" value="3.00 A"/>
    <property type="chains" value="H=1-194"/>
</dbReference>
<dbReference type="PDB" id="6ZMW">
    <property type="method" value="EM"/>
    <property type="resolution" value="3.70 A"/>
    <property type="chains" value="G=1-194"/>
</dbReference>
<dbReference type="PDB" id="6ZN5">
    <property type="method" value="EM"/>
    <property type="resolution" value="3.20 A"/>
    <property type="chains" value="H=8-193"/>
</dbReference>
<dbReference type="PDB" id="6ZOJ">
    <property type="method" value="EM"/>
    <property type="resolution" value="2.80 A"/>
    <property type="chains" value="H=1-194"/>
</dbReference>
<dbReference type="PDB" id="6ZOK">
    <property type="method" value="EM"/>
    <property type="resolution" value="2.80 A"/>
    <property type="chains" value="H=1-194"/>
</dbReference>
<dbReference type="PDB" id="6ZON">
    <property type="method" value="EM"/>
    <property type="resolution" value="3.00 A"/>
    <property type="chains" value="s=1-194"/>
</dbReference>
<dbReference type="PDB" id="6ZP4">
    <property type="method" value="EM"/>
    <property type="resolution" value="2.90 A"/>
    <property type="chains" value="s=1-194"/>
</dbReference>
<dbReference type="PDB" id="6ZUO">
    <property type="method" value="EM"/>
    <property type="resolution" value="3.10 A"/>
    <property type="chains" value="H=1-194"/>
</dbReference>
<dbReference type="PDB" id="6ZV6">
    <property type="method" value="EM"/>
    <property type="resolution" value="2.90 A"/>
    <property type="chains" value="H=1-194"/>
</dbReference>
<dbReference type="PDB" id="6ZVH">
    <property type="method" value="EM"/>
    <property type="resolution" value="2.90 A"/>
    <property type="chains" value="H=5-193"/>
</dbReference>
<dbReference type="PDB" id="6ZVJ">
    <property type="method" value="EM"/>
    <property type="resolution" value="3.80 A"/>
    <property type="chains" value="s=13-193"/>
</dbReference>
<dbReference type="PDB" id="6ZXD">
    <property type="method" value="EM"/>
    <property type="resolution" value="3.20 A"/>
    <property type="chains" value="H=1-194"/>
</dbReference>
<dbReference type="PDB" id="6ZXE">
    <property type="method" value="EM"/>
    <property type="resolution" value="3.00 A"/>
    <property type="chains" value="H=1-194"/>
</dbReference>
<dbReference type="PDB" id="6ZXF">
    <property type="method" value="EM"/>
    <property type="resolution" value="3.70 A"/>
    <property type="chains" value="H=1-194"/>
</dbReference>
<dbReference type="PDB" id="6ZXG">
    <property type="method" value="EM"/>
    <property type="resolution" value="2.60 A"/>
    <property type="chains" value="H=1-194"/>
</dbReference>
<dbReference type="PDB" id="6ZXH">
    <property type="method" value="EM"/>
    <property type="resolution" value="2.70 A"/>
    <property type="chains" value="H=1-194"/>
</dbReference>
<dbReference type="PDB" id="7A09">
    <property type="method" value="EM"/>
    <property type="resolution" value="3.50 A"/>
    <property type="chains" value="s=1-194"/>
</dbReference>
<dbReference type="PDB" id="7K5I">
    <property type="method" value="EM"/>
    <property type="resolution" value="2.90 A"/>
    <property type="chains" value="H=1-194"/>
</dbReference>
<dbReference type="PDB" id="7MQ8">
    <property type="method" value="EM"/>
    <property type="resolution" value="3.60 A"/>
    <property type="chains" value="L7=1-194"/>
</dbReference>
<dbReference type="PDB" id="7MQ9">
    <property type="method" value="EM"/>
    <property type="resolution" value="3.87 A"/>
    <property type="chains" value="L7=1-194"/>
</dbReference>
<dbReference type="PDB" id="7MQA">
    <property type="method" value="EM"/>
    <property type="resolution" value="2.70 A"/>
    <property type="chains" value="L7=1-194"/>
</dbReference>
<dbReference type="PDB" id="7QP6">
    <property type="method" value="EM"/>
    <property type="resolution" value="4.70 A"/>
    <property type="chains" value="G=1-194"/>
</dbReference>
<dbReference type="PDB" id="7QP7">
    <property type="method" value="EM"/>
    <property type="resolution" value="3.70 A"/>
    <property type="chains" value="G=1-194"/>
</dbReference>
<dbReference type="PDB" id="7R4X">
    <property type="method" value="EM"/>
    <property type="resolution" value="2.15 A"/>
    <property type="chains" value="H=1-194"/>
</dbReference>
<dbReference type="PDB" id="7TQL">
    <property type="method" value="EM"/>
    <property type="resolution" value="3.40 A"/>
    <property type="chains" value="H=8-192"/>
</dbReference>
<dbReference type="PDB" id="7WTS">
    <property type="method" value="EM"/>
    <property type="resolution" value="3.20 A"/>
    <property type="chains" value="H=1-194"/>
</dbReference>
<dbReference type="PDB" id="7WTT">
    <property type="method" value="EM"/>
    <property type="resolution" value="3.10 A"/>
    <property type="chains" value="H=1-194"/>
</dbReference>
<dbReference type="PDB" id="7WTU">
    <property type="method" value="EM"/>
    <property type="resolution" value="3.00 A"/>
    <property type="chains" value="H=1-194"/>
</dbReference>
<dbReference type="PDB" id="7WTV">
    <property type="method" value="EM"/>
    <property type="resolution" value="3.50 A"/>
    <property type="chains" value="H=1-194"/>
</dbReference>
<dbReference type="PDB" id="7WTW">
    <property type="method" value="EM"/>
    <property type="resolution" value="3.20 A"/>
    <property type="chains" value="H=1-194"/>
</dbReference>
<dbReference type="PDB" id="7WTX">
    <property type="method" value="EM"/>
    <property type="resolution" value="3.10 A"/>
    <property type="chains" value="H=1-194"/>
</dbReference>
<dbReference type="PDB" id="7WTZ">
    <property type="method" value="EM"/>
    <property type="resolution" value="3.00 A"/>
    <property type="chains" value="H=1-194"/>
</dbReference>
<dbReference type="PDB" id="7WU0">
    <property type="method" value="EM"/>
    <property type="resolution" value="3.30 A"/>
    <property type="chains" value="H=1-194"/>
</dbReference>
<dbReference type="PDB" id="7XNX">
    <property type="method" value="EM"/>
    <property type="resolution" value="2.70 A"/>
    <property type="chains" value="SH=1-194"/>
</dbReference>
<dbReference type="PDB" id="7XNY">
    <property type="method" value="EM"/>
    <property type="resolution" value="2.50 A"/>
    <property type="chains" value="SH=1-194"/>
</dbReference>
<dbReference type="PDB" id="8G5Y">
    <property type="method" value="EM"/>
    <property type="resolution" value="2.29 A"/>
    <property type="chains" value="SH=1-194"/>
</dbReference>
<dbReference type="PDB" id="8G5Z">
    <property type="method" value="EM"/>
    <property type="resolution" value="2.64 A"/>
    <property type="chains" value="SH=5-193"/>
</dbReference>
<dbReference type="PDB" id="8G60">
    <property type="method" value="EM"/>
    <property type="resolution" value="2.54 A"/>
    <property type="chains" value="SH=1-194"/>
</dbReference>
<dbReference type="PDB" id="8G61">
    <property type="method" value="EM"/>
    <property type="resolution" value="2.94 A"/>
    <property type="chains" value="SH=1-194"/>
</dbReference>
<dbReference type="PDB" id="8G6J">
    <property type="method" value="EM"/>
    <property type="resolution" value="2.80 A"/>
    <property type="chains" value="SH=1-194"/>
</dbReference>
<dbReference type="PDB" id="8GLP">
    <property type="method" value="EM"/>
    <property type="resolution" value="1.67 A"/>
    <property type="chains" value="SH=1-194"/>
</dbReference>
<dbReference type="PDB" id="8IFD">
    <property type="method" value="EM"/>
    <property type="resolution" value="2.59 A"/>
    <property type="chains" value="2s=1-194"/>
</dbReference>
<dbReference type="PDB" id="8IFE">
    <property type="method" value="EM"/>
    <property type="resolution" value="2.57 A"/>
    <property type="chains" value="2s=1-194"/>
</dbReference>
<dbReference type="PDB" id="8JDJ">
    <property type="method" value="EM"/>
    <property type="resolution" value="2.50 A"/>
    <property type="chains" value="4=1-194"/>
</dbReference>
<dbReference type="PDB" id="8JDK">
    <property type="method" value="EM"/>
    <property type="resolution" value="2.26 A"/>
    <property type="chains" value="4=1-194"/>
</dbReference>
<dbReference type="PDB" id="8JDL">
    <property type="method" value="EM"/>
    <property type="resolution" value="2.42 A"/>
    <property type="chains" value="4=1-194"/>
</dbReference>
<dbReference type="PDB" id="8JDM">
    <property type="method" value="EM"/>
    <property type="resolution" value="2.67 A"/>
    <property type="chains" value="4=1-194"/>
</dbReference>
<dbReference type="PDB" id="8K2C">
    <property type="method" value="EM"/>
    <property type="resolution" value="2.40 A"/>
    <property type="chains" value="SH=1-194"/>
</dbReference>
<dbReference type="PDB" id="8OZ0">
    <property type="method" value="EM"/>
    <property type="resolution" value="3.50 A"/>
    <property type="chains" value="L=1-194"/>
</dbReference>
<dbReference type="PDB" id="8PJ1">
    <property type="method" value="EM"/>
    <property type="resolution" value="3.40 A"/>
    <property type="chains" value="G=1-194"/>
</dbReference>
<dbReference type="PDB" id="8PJ2">
    <property type="method" value="EM"/>
    <property type="resolution" value="3.40 A"/>
    <property type="chains" value="G=1-194"/>
</dbReference>
<dbReference type="PDB" id="8PJ3">
    <property type="method" value="EM"/>
    <property type="resolution" value="3.70 A"/>
    <property type="chains" value="G=1-194"/>
</dbReference>
<dbReference type="PDB" id="8PJ4">
    <property type="method" value="EM"/>
    <property type="resolution" value="3.20 A"/>
    <property type="chains" value="G=1-194"/>
</dbReference>
<dbReference type="PDB" id="8PJ5">
    <property type="method" value="EM"/>
    <property type="resolution" value="2.90 A"/>
    <property type="chains" value="G=1-194"/>
</dbReference>
<dbReference type="PDB" id="8PJ6">
    <property type="method" value="EM"/>
    <property type="resolution" value="2.90 A"/>
    <property type="chains" value="G=1-194"/>
</dbReference>
<dbReference type="PDB" id="8PPK">
    <property type="method" value="EM"/>
    <property type="resolution" value="2.98 A"/>
    <property type="chains" value="H=1-194"/>
</dbReference>
<dbReference type="PDB" id="8PPL">
    <property type="method" value="EM"/>
    <property type="resolution" value="2.65 A"/>
    <property type="chains" value="AH=1-194"/>
</dbReference>
<dbReference type="PDB" id="8QOI">
    <property type="method" value="EM"/>
    <property type="resolution" value="1.90 A"/>
    <property type="chains" value="SH=1-194"/>
</dbReference>
<dbReference type="PDB" id="8T4S">
    <property type="method" value="EM"/>
    <property type="resolution" value="2.60 A"/>
    <property type="chains" value="H=1-194"/>
</dbReference>
<dbReference type="PDB" id="8UKB">
    <property type="method" value="EM"/>
    <property type="resolution" value="3.05 A"/>
    <property type="chains" value="SH=5-193"/>
</dbReference>
<dbReference type="PDB" id="8XP2">
    <property type="method" value="EM"/>
    <property type="resolution" value="3.20 A"/>
    <property type="chains" value="SH=1-194"/>
</dbReference>
<dbReference type="PDB" id="8XP3">
    <property type="method" value="EM"/>
    <property type="resolution" value="3.40 A"/>
    <property type="chains" value="SH=1-194"/>
</dbReference>
<dbReference type="PDB" id="8XSX">
    <property type="method" value="EM"/>
    <property type="resolution" value="2.40 A"/>
    <property type="chains" value="SH=1-194"/>
</dbReference>
<dbReference type="PDB" id="8XSY">
    <property type="method" value="EM"/>
    <property type="resolution" value="3.00 A"/>
    <property type="chains" value="SH=1-194"/>
</dbReference>
<dbReference type="PDB" id="8XSZ">
    <property type="method" value="EM"/>
    <property type="resolution" value="3.20 A"/>
    <property type="chains" value="SH=1-194"/>
</dbReference>
<dbReference type="PDB" id="8XXL">
    <property type="method" value="EM"/>
    <property type="resolution" value="2.90 A"/>
    <property type="chains" value="SH=1-194"/>
</dbReference>
<dbReference type="PDB" id="8XXM">
    <property type="method" value="EM"/>
    <property type="resolution" value="3.20 A"/>
    <property type="chains" value="SH=1-194"/>
</dbReference>
<dbReference type="PDB" id="8XXN">
    <property type="method" value="EM"/>
    <property type="resolution" value="3.60 A"/>
    <property type="chains" value="SH=1-194"/>
</dbReference>
<dbReference type="PDB" id="8Y0W">
    <property type="method" value="EM"/>
    <property type="resolution" value="3.40 A"/>
    <property type="chains" value="SH=1-194"/>
</dbReference>
<dbReference type="PDB" id="8Y0X">
    <property type="method" value="EM"/>
    <property type="resolution" value="3.30 A"/>
    <property type="chains" value="SH=1-194"/>
</dbReference>
<dbReference type="PDB" id="8YOO">
    <property type="method" value="EM"/>
    <property type="resolution" value="2.00 A"/>
    <property type="chains" value="SH=1-194"/>
</dbReference>
<dbReference type="PDB" id="8YOP">
    <property type="method" value="EM"/>
    <property type="resolution" value="2.20 A"/>
    <property type="chains" value="SH=1-194"/>
</dbReference>
<dbReference type="PDB" id="8ZDB">
    <property type="method" value="EM"/>
    <property type="resolution" value="3.60 A"/>
    <property type="chains" value="H=1-194"/>
</dbReference>
<dbReference type="PDB" id="8ZDC">
    <property type="method" value="EM"/>
    <property type="resolution" value="3.80 A"/>
    <property type="chains" value="H=1-194"/>
</dbReference>
<dbReference type="PDB" id="8ZDD">
    <property type="method" value="EM"/>
    <property type="resolution" value="3.70 A"/>
    <property type="chains" value="H=1-194"/>
</dbReference>
<dbReference type="PDB" id="9BKD">
    <property type="method" value="EM"/>
    <property type="resolution" value="2.60 A"/>
    <property type="chains" value="G=1-194"/>
</dbReference>
<dbReference type="PDB" id="9BLN">
    <property type="method" value="EM"/>
    <property type="resolution" value="3.90 A"/>
    <property type="chains" value="G=1-194"/>
</dbReference>
<dbReference type="PDB" id="9C3H">
    <property type="method" value="EM"/>
    <property type="resolution" value="2.00 A"/>
    <property type="chains" value="SH=1-194"/>
</dbReference>
<dbReference type="PDB" id="9G8M">
    <property type="method" value="EM"/>
    <property type="resolution" value="3.30 A"/>
    <property type="chains" value="SH=1-194"/>
</dbReference>
<dbReference type="PDB" id="9G8O">
    <property type="method" value="EM"/>
    <property type="resolution" value="3.40 A"/>
    <property type="chains" value="SH=1-194"/>
</dbReference>
<dbReference type="PDBsum" id="4UG0"/>
<dbReference type="PDBsum" id="4V6X"/>
<dbReference type="PDBsum" id="5A2Q"/>
<dbReference type="PDBsum" id="5AJ0"/>
<dbReference type="PDBsum" id="5FLX"/>
<dbReference type="PDBsum" id="5LKS"/>
<dbReference type="PDBsum" id="5OA3"/>
<dbReference type="PDBsum" id="5T2C"/>
<dbReference type="PDBsum" id="5VYC"/>
<dbReference type="PDBsum" id="6FEC"/>
<dbReference type="PDBsum" id="6G18"/>
<dbReference type="PDBsum" id="6G4S"/>
<dbReference type="PDBsum" id="6G4W"/>
<dbReference type="PDBsum" id="6G51"/>
<dbReference type="PDBsum" id="6G53"/>
<dbReference type="PDBsum" id="6G5H"/>
<dbReference type="PDBsum" id="6G5I"/>
<dbReference type="PDBsum" id="6IP5"/>
<dbReference type="PDBsum" id="6IP6"/>
<dbReference type="PDBsum" id="6IP8"/>
<dbReference type="PDBsum" id="6OLE"/>
<dbReference type="PDBsum" id="6OLF"/>
<dbReference type="PDBsum" id="6OLG"/>
<dbReference type="PDBsum" id="6OLI"/>
<dbReference type="PDBsum" id="6OLZ"/>
<dbReference type="PDBsum" id="6OM0"/>
<dbReference type="PDBsum" id="6OM7"/>
<dbReference type="PDBsum" id="6QZP"/>
<dbReference type="PDBsum" id="6XA1"/>
<dbReference type="PDBsum" id="6Y0G"/>
<dbReference type="PDBsum" id="6Y2L"/>
<dbReference type="PDBsum" id="6Y57"/>
<dbReference type="PDBsum" id="6YBD"/>
<dbReference type="PDBsum" id="6YBW"/>
<dbReference type="PDBsum" id="6Z6L"/>
<dbReference type="PDBsum" id="6Z6M"/>
<dbReference type="PDBsum" id="6Z6N"/>
<dbReference type="PDBsum" id="6ZLW"/>
<dbReference type="PDBsum" id="6ZM7"/>
<dbReference type="PDBsum" id="6ZME"/>
<dbReference type="PDBsum" id="6ZMI"/>
<dbReference type="PDBsum" id="6ZMO"/>
<dbReference type="PDBsum" id="6ZMT"/>
<dbReference type="PDBsum" id="6ZMW"/>
<dbReference type="PDBsum" id="6ZN5"/>
<dbReference type="PDBsum" id="6ZOJ"/>
<dbReference type="PDBsum" id="6ZOK"/>
<dbReference type="PDBsum" id="6ZON"/>
<dbReference type="PDBsum" id="6ZP4"/>
<dbReference type="PDBsum" id="6ZUO"/>
<dbReference type="PDBsum" id="6ZV6"/>
<dbReference type="PDBsum" id="6ZVH"/>
<dbReference type="PDBsum" id="6ZVJ"/>
<dbReference type="PDBsum" id="6ZXD"/>
<dbReference type="PDBsum" id="6ZXE"/>
<dbReference type="PDBsum" id="6ZXF"/>
<dbReference type="PDBsum" id="6ZXG"/>
<dbReference type="PDBsum" id="6ZXH"/>
<dbReference type="PDBsum" id="7A09"/>
<dbReference type="PDBsum" id="7K5I"/>
<dbReference type="PDBsum" id="7MQ8"/>
<dbReference type="PDBsum" id="7MQ9"/>
<dbReference type="PDBsum" id="7MQA"/>
<dbReference type="PDBsum" id="7QP6"/>
<dbReference type="PDBsum" id="7QP7"/>
<dbReference type="PDBsum" id="7R4X"/>
<dbReference type="PDBsum" id="7TQL"/>
<dbReference type="PDBsum" id="7WTS"/>
<dbReference type="PDBsum" id="7WTT"/>
<dbReference type="PDBsum" id="7WTU"/>
<dbReference type="PDBsum" id="7WTV"/>
<dbReference type="PDBsum" id="7WTW"/>
<dbReference type="PDBsum" id="7WTX"/>
<dbReference type="PDBsum" id="7WTZ"/>
<dbReference type="PDBsum" id="7WU0"/>
<dbReference type="PDBsum" id="7XNX"/>
<dbReference type="PDBsum" id="7XNY"/>
<dbReference type="PDBsum" id="8G5Y"/>
<dbReference type="PDBsum" id="8G5Z"/>
<dbReference type="PDBsum" id="8G60"/>
<dbReference type="PDBsum" id="8G61"/>
<dbReference type="PDBsum" id="8G6J"/>
<dbReference type="PDBsum" id="8GLP"/>
<dbReference type="PDBsum" id="8IFD"/>
<dbReference type="PDBsum" id="8IFE"/>
<dbReference type="PDBsum" id="8JDJ"/>
<dbReference type="PDBsum" id="8JDK"/>
<dbReference type="PDBsum" id="8JDL"/>
<dbReference type="PDBsum" id="8JDM"/>
<dbReference type="PDBsum" id="8K2C"/>
<dbReference type="PDBsum" id="8OZ0"/>
<dbReference type="PDBsum" id="8PJ1"/>
<dbReference type="PDBsum" id="8PJ2"/>
<dbReference type="PDBsum" id="8PJ3"/>
<dbReference type="PDBsum" id="8PJ4"/>
<dbReference type="PDBsum" id="8PJ5"/>
<dbReference type="PDBsum" id="8PJ6"/>
<dbReference type="PDBsum" id="8PPK"/>
<dbReference type="PDBsum" id="8PPL"/>
<dbReference type="PDBsum" id="8QOI"/>
<dbReference type="PDBsum" id="8T4S"/>
<dbReference type="PDBsum" id="8UKB"/>
<dbReference type="PDBsum" id="8XP2"/>
<dbReference type="PDBsum" id="8XP3"/>
<dbReference type="PDBsum" id="8XSX"/>
<dbReference type="PDBsum" id="8XSY"/>
<dbReference type="PDBsum" id="8XSZ"/>
<dbReference type="PDBsum" id="8XXL"/>
<dbReference type="PDBsum" id="8XXM"/>
<dbReference type="PDBsum" id="8XXN"/>
<dbReference type="PDBsum" id="8Y0W"/>
<dbReference type="PDBsum" id="8Y0X"/>
<dbReference type="PDBsum" id="8YOO"/>
<dbReference type="PDBsum" id="8YOP"/>
<dbReference type="PDBsum" id="8ZDB"/>
<dbReference type="PDBsum" id="8ZDC"/>
<dbReference type="PDBsum" id="8ZDD"/>
<dbReference type="PDBsum" id="9BKD"/>
<dbReference type="PDBsum" id="9BLN"/>
<dbReference type="PDBsum" id="9C3H"/>
<dbReference type="PDBsum" id="9G8M"/>
<dbReference type="PDBsum" id="9G8O"/>
<dbReference type="EMDB" id="EMD-10668"/>
<dbReference type="EMDB" id="EMD-10674"/>
<dbReference type="EMDB" id="EMD-10690"/>
<dbReference type="EMDB" id="EMD-10769"/>
<dbReference type="EMDB" id="EMD-10775"/>
<dbReference type="EMDB" id="EMD-11098"/>
<dbReference type="EMDB" id="EMD-11099"/>
<dbReference type="EMDB" id="EMD-11100"/>
<dbReference type="EMDB" id="EMD-11276"/>
<dbReference type="EMDB" id="EMD-11288"/>
<dbReference type="EMDB" id="EMD-11289"/>
<dbReference type="EMDB" id="EMD-11292"/>
<dbReference type="EMDB" id="EMD-11299"/>
<dbReference type="EMDB" id="EMD-11301"/>
<dbReference type="EMDB" id="EMD-11302"/>
<dbReference type="EMDB" id="EMD-11310"/>
<dbReference type="EMDB" id="EMD-11320"/>
<dbReference type="EMDB" id="EMD-11321"/>
<dbReference type="EMDB" id="EMD-11325"/>
<dbReference type="EMDB" id="EMD-11335"/>
<dbReference type="EMDB" id="EMD-11440"/>
<dbReference type="EMDB" id="EMD-11441"/>
<dbReference type="EMDB" id="EMD-11456"/>
<dbReference type="EMDB" id="EMD-11458"/>
<dbReference type="EMDB" id="EMD-11517"/>
<dbReference type="EMDB" id="EMD-11518"/>
<dbReference type="EMDB" id="EMD-11519"/>
<dbReference type="EMDB" id="EMD-11520"/>
<dbReference type="EMDB" id="EMD-11521"/>
<dbReference type="EMDB" id="EMD-11602"/>
<dbReference type="EMDB" id="EMD-14113"/>
<dbReference type="EMDB" id="EMD-14114"/>
<dbReference type="EMDB" id="EMD-14317"/>
<dbReference type="EMDB" id="EMD-17297"/>
<dbReference type="EMDB" id="EMD-17696"/>
<dbReference type="EMDB" id="EMD-17697"/>
<dbReference type="EMDB" id="EMD-17698"/>
<dbReference type="EMDB" id="EMD-17699"/>
<dbReference type="EMDB" id="EMD-17700"/>
<dbReference type="EMDB" id="EMD-17701"/>
<dbReference type="EMDB" id="EMD-17804"/>
<dbReference type="EMDB" id="EMD-17805"/>
<dbReference type="EMDB" id="EMD-18539"/>
<dbReference type="EMDB" id="EMD-22681"/>
<dbReference type="EMDB" id="EMD-23936"/>
<dbReference type="EMDB" id="EMD-23937"/>
<dbReference type="EMDB" id="EMD-23938"/>
<dbReference type="EMDB" id="EMD-26067"/>
<dbReference type="EMDB" id="EMD-29757"/>
<dbReference type="EMDB" id="EMD-29758"/>
<dbReference type="EMDB" id="EMD-29759"/>
<dbReference type="EMDB" id="EMD-29760"/>
<dbReference type="EMDB" id="EMD-29771"/>
<dbReference type="EMDB" id="EMD-32799"/>
<dbReference type="EMDB" id="EMD-32800"/>
<dbReference type="EMDB" id="EMD-32801"/>
<dbReference type="EMDB" id="EMD-32802"/>
<dbReference type="EMDB" id="EMD-32803"/>
<dbReference type="EMDB" id="EMD-32804"/>
<dbReference type="EMDB" id="EMD-32806"/>
<dbReference type="EMDB" id="EMD-32807"/>
<dbReference type="EMDB" id="EMD-33329"/>
<dbReference type="EMDB" id="EMD-33330"/>
<dbReference type="EMDB" id="EMD-35413"/>
<dbReference type="EMDB" id="EMD-35414"/>
<dbReference type="EMDB" id="EMD-36178"/>
<dbReference type="EMDB" id="EMD-36179"/>
<dbReference type="EMDB" id="EMD-36180"/>
<dbReference type="EMDB" id="EMD-36181"/>
<dbReference type="EMDB" id="EMD-36838"/>
<dbReference type="EMDB" id="EMD-3770"/>
<dbReference type="EMDB" id="EMD-38548"/>
<dbReference type="EMDB" id="EMD-38549"/>
<dbReference type="EMDB" id="EMD-38629"/>
<dbReference type="EMDB" id="EMD-38630"/>
<dbReference type="EMDB" id="EMD-38631"/>
<dbReference type="EMDB" id="EMD-38752"/>
<dbReference type="EMDB" id="EMD-38753"/>
<dbReference type="EMDB" id="EMD-38754"/>
<dbReference type="EMDB" id="EMD-3883"/>
<dbReference type="EMDB" id="EMD-39455"/>
<dbReference type="EMDB" id="EMD-39456"/>
<dbReference type="EMDB" id="EMD-39956"/>
<dbReference type="EMDB" id="EMD-39957"/>
<dbReference type="EMDB" id="EMD-39958"/>
<dbReference type="EMDB" id="EMD-40205"/>
<dbReference type="EMDB" id="EMD-4070"/>
<dbReference type="EMDB" id="EMD-41039"/>
<dbReference type="EMDB" id="EMD-42351"/>
<dbReference type="EMDB" id="EMD-4242"/>
<dbReference type="EMDB" id="EMD-4337"/>
<dbReference type="EMDB" id="EMD-4348"/>
<dbReference type="EMDB" id="EMD-4349"/>
<dbReference type="EMDB" id="EMD-4350"/>
<dbReference type="EMDB" id="EMD-4351"/>
<dbReference type="EMDB" id="EMD-4352"/>
<dbReference type="EMDB" id="EMD-4353"/>
<dbReference type="EMDB" id="EMD-44641"/>
<dbReference type="EMDB" id="EMD-44671"/>
<dbReference type="EMDB" id="EMD-45170"/>
<dbReference type="EMDB" id="EMD-51132"/>
<dbReference type="EMDB" id="EMD-51134"/>
<dbReference type="EMDB" id="EMD-9701"/>
<dbReference type="EMDB" id="EMD-9702"/>
<dbReference type="EMDB" id="EMD-9703"/>
<dbReference type="SMR" id="P62081"/>
<dbReference type="BioGRID" id="112115">
    <property type="interactions" value="482"/>
</dbReference>
<dbReference type="ComplexPortal" id="CPX-5223">
    <property type="entry name" value="40S cytosolic small ribosomal subunit"/>
</dbReference>
<dbReference type="CORUM" id="P62081"/>
<dbReference type="FunCoup" id="P62081">
    <property type="interactions" value="2292"/>
</dbReference>
<dbReference type="IntAct" id="P62081">
    <property type="interactions" value="146"/>
</dbReference>
<dbReference type="MINT" id="P62081"/>
<dbReference type="STRING" id="9606.ENSP00000495273"/>
<dbReference type="MoonProt" id="P62081"/>
<dbReference type="GlyGen" id="P62081">
    <property type="glycosylation" value="1 site, 1 O-linked glycan (1 site)"/>
</dbReference>
<dbReference type="iPTMnet" id="P62081"/>
<dbReference type="MetOSite" id="P62081"/>
<dbReference type="PhosphoSitePlus" id="P62081"/>
<dbReference type="SwissPalm" id="P62081"/>
<dbReference type="BioMuta" id="RPS7"/>
<dbReference type="DMDM" id="49065831"/>
<dbReference type="jPOST" id="P62081"/>
<dbReference type="MassIVE" id="P62081"/>
<dbReference type="PaxDb" id="9606-ENSP00000339095"/>
<dbReference type="PeptideAtlas" id="P62081"/>
<dbReference type="ProteomicsDB" id="57364"/>
<dbReference type="Pumba" id="P62081"/>
<dbReference type="TopDownProteomics" id="P62081"/>
<dbReference type="Antibodypedia" id="26343">
    <property type="antibodies" value="179 antibodies from 28 providers"/>
</dbReference>
<dbReference type="DNASU" id="6201"/>
<dbReference type="Ensembl" id="ENST00000403564.5">
    <property type="protein sequence ID" value="ENSP00000385018.1"/>
    <property type="gene ID" value="ENSG00000171863.15"/>
</dbReference>
<dbReference type="Ensembl" id="ENST00000406376.1">
    <property type="protein sequence ID" value="ENSP00000385286.1"/>
    <property type="gene ID" value="ENSG00000171863.15"/>
</dbReference>
<dbReference type="Ensembl" id="ENST00000462576.5">
    <property type="protein sequence ID" value="ENSP00000495273.1"/>
    <property type="gene ID" value="ENSG00000171863.15"/>
</dbReference>
<dbReference type="Ensembl" id="ENST00000645674.2">
    <property type="protein sequence ID" value="ENSP00000496757.1"/>
    <property type="gene ID" value="ENSG00000171863.15"/>
</dbReference>
<dbReference type="Ensembl" id="ENST00000646909.1">
    <property type="protein sequence ID" value="ENSP00000496654.1"/>
    <property type="gene ID" value="ENSG00000171863.15"/>
</dbReference>
<dbReference type="GeneID" id="6201"/>
<dbReference type="KEGG" id="hsa:6201"/>
<dbReference type="MANE-Select" id="ENST00000645674.2">
    <property type="protein sequence ID" value="ENSP00000496757.1"/>
    <property type="RefSeq nucleotide sequence ID" value="NM_001011.4"/>
    <property type="RefSeq protein sequence ID" value="NP_001002.1"/>
</dbReference>
<dbReference type="UCSC" id="uc002qxw.4">
    <property type="organism name" value="human"/>
</dbReference>
<dbReference type="AGR" id="HGNC:10440"/>
<dbReference type="CTD" id="6201"/>
<dbReference type="DisGeNET" id="6201"/>
<dbReference type="GeneCards" id="RPS7"/>
<dbReference type="GeneReviews" id="RPS7"/>
<dbReference type="HGNC" id="HGNC:10440">
    <property type="gene designation" value="RPS7"/>
</dbReference>
<dbReference type="HPA" id="ENSG00000171863">
    <property type="expression patterns" value="Low tissue specificity"/>
</dbReference>
<dbReference type="MalaCards" id="RPS7"/>
<dbReference type="MIM" id="603658">
    <property type="type" value="gene"/>
</dbReference>
<dbReference type="MIM" id="612563">
    <property type="type" value="phenotype"/>
</dbReference>
<dbReference type="neXtProt" id="NX_P62081"/>
<dbReference type="OpenTargets" id="ENSG00000171863"/>
<dbReference type="Orphanet" id="124">
    <property type="disease" value="Diamond-Blackfan anemia"/>
</dbReference>
<dbReference type="PharmGKB" id="PA34855"/>
<dbReference type="VEuPathDB" id="HostDB:ENSG00000171863"/>
<dbReference type="eggNOG" id="KOG3320">
    <property type="taxonomic scope" value="Eukaryota"/>
</dbReference>
<dbReference type="GeneTree" id="ENSGT00390000014122"/>
<dbReference type="HOGENOM" id="CLU_088621_1_2_1"/>
<dbReference type="InParanoid" id="P62081"/>
<dbReference type="OMA" id="AAYHKVQ"/>
<dbReference type="OrthoDB" id="1724687at2759"/>
<dbReference type="PAN-GO" id="P62081">
    <property type="GO annotations" value="4 GO annotations based on evolutionary models"/>
</dbReference>
<dbReference type="PhylomeDB" id="P62081"/>
<dbReference type="TreeFam" id="TF343364"/>
<dbReference type="PathwayCommons" id="P62081"/>
<dbReference type="Reactome" id="R-HSA-156827">
    <property type="pathway name" value="L13a-mediated translational silencing of Ceruloplasmin expression"/>
</dbReference>
<dbReference type="Reactome" id="R-HSA-156902">
    <property type="pathway name" value="Peptide chain elongation"/>
</dbReference>
<dbReference type="Reactome" id="R-HSA-1799339">
    <property type="pathway name" value="SRP-dependent cotranslational protein targeting to membrane"/>
</dbReference>
<dbReference type="Reactome" id="R-HSA-192823">
    <property type="pathway name" value="Viral mRNA Translation"/>
</dbReference>
<dbReference type="Reactome" id="R-HSA-2408557">
    <property type="pathway name" value="Selenocysteine synthesis"/>
</dbReference>
<dbReference type="Reactome" id="R-HSA-6790901">
    <property type="pathway name" value="rRNA modification in the nucleus and cytosol"/>
</dbReference>
<dbReference type="Reactome" id="R-HSA-6791226">
    <property type="pathway name" value="Major pathway of rRNA processing in the nucleolus and cytosol"/>
</dbReference>
<dbReference type="Reactome" id="R-HSA-72649">
    <property type="pathway name" value="Translation initiation complex formation"/>
</dbReference>
<dbReference type="Reactome" id="R-HSA-72689">
    <property type="pathway name" value="Formation of a pool of free 40S subunits"/>
</dbReference>
<dbReference type="Reactome" id="R-HSA-72695">
    <property type="pathway name" value="Formation of the ternary complex, and subsequently, the 43S complex"/>
</dbReference>
<dbReference type="Reactome" id="R-HSA-72702">
    <property type="pathway name" value="Ribosomal scanning and start codon recognition"/>
</dbReference>
<dbReference type="Reactome" id="R-HSA-72706">
    <property type="pathway name" value="GTP hydrolysis and joining of the 60S ribosomal subunit"/>
</dbReference>
<dbReference type="Reactome" id="R-HSA-72764">
    <property type="pathway name" value="Eukaryotic Translation Termination"/>
</dbReference>
<dbReference type="Reactome" id="R-HSA-9010553">
    <property type="pathway name" value="Regulation of expression of SLITs and ROBOs"/>
</dbReference>
<dbReference type="Reactome" id="R-HSA-9633012">
    <property type="pathway name" value="Response of EIF2AK4 (GCN2) to amino acid deficiency"/>
</dbReference>
<dbReference type="Reactome" id="R-HSA-9735869">
    <property type="pathway name" value="SARS-CoV-1 modulates host translation machinery"/>
</dbReference>
<dbReference type="Reactome" id="R-HSA-9754678">
    <property type="pathway name" value="SARS-CoV-2 modulates host translation machinery"/>
</dbReference>
<dbReference type="Reactome" id="R-HSA-975956">
    <property type="pathway name" value="Nonsense Mediated Decay (NMD) independent of the Exon Junction Complex (EJC)"/>
</dbReference>
<dbReference type="Reactome" id="R-HSA-975957">
    <property type="pathway name" value="Nonsense Mediated Decay (NMD) enhanced by the Exon Junction Complex (EJC)"/>
</dbReference>
<dbReference type="SignaLink" id="P62081"/>
<dbReference type="SIGNOR" id="P62081"/>
<dbReference type="BioGRID-ORCS" id="6201">
    <property type="hits" value="786 hits in 1074 CRISPR screens"/>
</dbReference>
<dbReference type="CD-CODE" id="232F8A39">
    <property type="entry name" value="P-body"/>
</dbReference>
<dbReference type="CD-CODE" id="91857CE7">
    <property type="entry name" value="Nucleolus"/>
</dbReference>
<dbReference type="ChiTaRS" id="RPS7">
    <property type="organism name" value="human"/>
</dbReference>
<dbReference type="GeneWiki" id="RPS7"/>
<dbReference type="GenomeRNAi" id="6201"/>
<dbReference type="Pharos" id="P62081">
    <property type="development level" value="Tbio"/>
</dbReference>
<dbReference type="PRO" id="PR:P62081"/>
<dbReference type="Proteomes" id="UP000005640">
    <property type="component" value="Chromosome 2"/>
</dbReference>
<dbReference type="RNAct" id="P62081">
    <property type="molecule type" value="protein"/>
</dbReference>
<dbReference type="Bgee" id="ENSG00000171863">
    <property type="expression patterns" value="Expressed in primordial germ cell in gonad and 98 other cell types or tissues"/>
</dbReference>
<dbReference type="ExpressionAtlas" id="P62081">
    <property type="expression patterns" value="baseline and differential"/>
</dbReference>
<dbReference type="GO" id="GO:0005813">
    <property type="term" value="C:centrosome"/>
    <property type="evidence" value="ECO:0007669"/>
    <property type="project" value="UniProtKB-SubCell"/>
</dbReference>
<dbReference type="GO" id="GO:0005737">
    <property type="term" value="C:cytoplasm"/>
    <property type="evidence" value="ECO:0000303"/>
    <property type="project" value="ComplexPortal"/>
</dbReference>
<dbReference type="GO" id="GO:0005829">
    <property type="term" value="C:cytosol"/>
    <property type="evidence" value="ECO:0000314"/>
    <property type="project" value="HPA"/>
</dbReference>
<dbReference type="GO" id="GO:0022626">
    <property type="term" value="C:cytosolic ribosome"/>
    <property type="evidence" value="ECO:0000314"/>
    <property type="project" value="FlyBase"/>
</dbReference>
<dbReference type="GO" id="GO:0022627">
    <property type="term" value="C:cytosolic small ribosomal subunit"/>
    <property type="evidence" value="ECO:0000314"/>
    <property type="project" value="UniProtKB"/>
</dbReference>
<dbReference type="GO" id="GO:0005783">
    <property type="term" value="C:endoplasmic reticulum"/>
    <property type="evidence" value="ECO:0000314"/>
    <property type="project" value="HPA"/>
</dbReference>
<dbReference type="GO" id="GO:0005925">
    <property type="term" value="C:focal adhesion"/>
    <property type="evidence" value="ECO:0007005"/>
    <property type="project" value="UniProtKB"/>
</dbReference>
<dbReference type="GO" id="GO:0016020">
    <property type="term" value="C:membrane"/>
    <property type="evidence" value="ECO:0007005"/>
    <property type="project" value="UniProtKB"/>
</dbReference>
<dbReference type="GO" id="GO:0005730">
    <property type="term" value="C:nucleolus"/>
    <property type="evidence" value="ECO:0000314"/>
    <property type="project" value="UniProtKB"/>
</dbReference>
<dbReference type="GO" id="GO:0005654">
    <property type="term" value="C:nucleoplasm"/>
    <property type="evidence" value="ECO:0000304"/>
    <property type="project" value="Reactome"/>
</dbReference>
<dbReference type="GO" id="GO:0005634">
    <property type="term" value="C:nucleus"/>
    <property type="evidence" value="ECO:0000314"/>
    <property type="project" value="UniProtKB"/>
</dbReference>
<dbReference type="GO" id="GO:0032991">
    <property type="term" value="C:protein-containing complex"/>
    <property type="evidence" value="ECO:0000314"/>
    <property type="project" value="UniProtKB"/>
</dbReference>
<dbReference type="GO" id="GO:1990904">
    <property type="term" value="C:ribonucleoprotein complex"/>
    <property type="evidence" value="ECO:0000314"/>
    <property type="project" value="MGI"/>
</dbReference>
<dbReference type="GO" id="GO:0005840">
    <property type="term" value="C:ribosome"/>
    <property type="evidence" value="ECO:0007005"/>
    <property type="project" value="UniProtKB"/>
</dbReference>
<dbReference type="GO" id="GO:0032040">
    <property type="term" value="C:small-subunit processome"/>
    <property type="evidence" value="ECO:0000314"/>
    <property type="project" value="UniProtKB"/>
</dbReference>
<dbReference type="GO" id="GO:0045202">
    <property type="term" value="C:synapse"/>
    <property type="evidence" value="ECO:0007669"/>
    <property type="project" value="Ensembl"/>
</dbReference>
<dbReference type="GO" id="GO:0003730">
    <property type="term" value="F:mRNA 3'-UTR binding"/>
    <property type="evidence" value="ECO:0000314"/>
    <property type="project" value="CAFA"/>
</dbReference>
<dbReference type="GO" id="GO:0048027">
    <property type="term" value="F:mRNA 5'-UTR binding"/>
    <property type="evidence" value="ECO:0000314"/>
    <property type="project" value="CAFA"/>
</dbReference>
<dbReference type="GO" id="GO:0019901">
    <property type="term" value="F:protein kinase binding"/>
    <property type="evidence" value="ECO:0000353"/>
    <property type="project" value="UniProtKB"/>
</dbReference>
<dbReference type="GO" id="GO:0003723">
    <property type="term" value="F:RNA binding"/>
    <property type="evidence" value="ECO:0007005"/>
    <property type="project" value="UniProtKB"/>
</dbReference>
<dbReference type="GO" id="GO:0003735">
    <property type="term" value="F:structural constituent of ribosome"/>
    <property type="evidence" value="ECO:0000314"/>
    <property type="project" value="FlyBase"/>
</dbReference>
<dbReference type="GO" id="GO:1990948">
    <property type="term" value="F:ubiquitin ligase inhibitor activity"/>
    <property type="evidence" value="ECO:0000314"/>
    <property type="project" value="CAFA"/>
</dbReference>
<dbReference type="GO" id="GO:0002181">
    <property type="term" value="P:cytoplasmic translation"/>
    <property type="evidence" value="ECO:0000303"/>
    <property type="project" value="ComplexPortal"/>
</dbReference>
<dbReference type="GO" id="GO:1904667">
    <property type="term" value="P:negative regulation of ubiquitin protein ligase activity"/>
    <property type="evidence" value="ECO:0000314"/>
    <property type="project" value="CAFA"/>
</dbReference>
<dbReference type="GO" id="GO:2000059">
    <property type="term" value="P:negative regulation of ubiquitin-dependent protein catabolic process"/>
    <property type="evidence" value="ECO:0000314"/>
    <property type="project" value="CAFA"/>
</dbReference>
<dbReference type="GO" id="GO:0014033">
    <property type="term" value="P:neural crest cell differentiation"/>
    <property type="evidence" value="ECO:0007669"/>
    <property type="project" value="Ensembl"/>
</dbReference>
<dbReference type="GO" id="GO:0001843">
    <property type="term" value="P:neural tube closure"/>
    <property type="evidence" value="ECO:0007669"/>
    <property type="project" value="Ensembl"/>
</dbReference>
<dbReference type="GO" id="GO:0010628">
    <property type="term" value="P:positive regulation of gene expression"/>
    <property type="evidence" value="ECO:0000315"/>
    <property type="project" value="CAFA"/>
</dbReference>
<dbReference type="GO" id="GO:1902255">
    <property type="term" value="P:positive regulation of intrinsic apoptotic signaling pathway by p53 class mediator"/>
    <property type="evidence" value="ECO:0000315"/>
    <property type="project" value="CAFA"/>
</dbReference>
<dbReference type="GO" id="GO:0050821">
    <property type="term" value="P:protein stabilization"/>
    <property type="evidence" value="ECO:0000315"/>
    <property type="project" value="CAFA"/>
</dbReference>
<dbReference type="GO" id="GO:0042274">
    <property type="term" value="P:ribosomal small subunit biogenesis"/>
    <property type="evidence" value="ECO:0000314"/>
    <property type="project" value="UniProtKB"/>
</dbReference>
<dbReference type="GO" id="GO:0006364">
    <property type="term" value="P:rRNA processing"/>
    <property type="evidence" value="ECO:0000315"/>
    <property type="project" value="UniProtKB"/>
</dbReference>
<dbReference type="GO" id="GO:0006412">
    <property type="term" value="P:translation"/>
    <property type="evidence" value="ECO:0000303"/>
    <property type="project" value="UniProtKB"/>
</dbReference>
<dbReference type="InterPro" id="IPR000554">
    <property type="entry name" value="Ribosomal_eS7"/>
</dbReference>
<dbReference type="InterPro" id="IPR047861">
    <property type="entry name" value="Ribosomal_eS7_CS"/>
</dbReference>
<dbReference type="PANTHER" id="PTHR11278">
    <property type="entry name" value="40S RIBOSOMAL PROTEIN S7"/>
    <property type="match status" value="1"/>
</dbReference>
<dbReference type="PANTHER" id="PTHR11278:SF0">
    <property type="entry name" value="SMALL RIBOSOMAL SUBUNIT PROTEIN ES7"/>
    <property type="match status" value="1"/>
</dbReference>
<dbReference type="Pfam" id="PF01251">
    <property type="entry name" value="Ribosomal_S7e"/>
    <property type="match status" value="1"/>
</dbReference>
<dbReference type="PROSITE" id="PS00948">
    <property type="entry name" value="RIBOSOMAL_S7E"/>
    <property type="match status" value="1"/>
</dbReference>
<name>RS7_HUMAN</name>
<protein>
    <recommendedName>
        <fullName evidence="9">Small ribosomal subunit protein eS7</fullName>
    </recommendedName>
    <alternativeName>
        <fullName>40S ribosomal protein S7</fullName>
    </alternativeName>
</protein>
<proteinExistence type="evidence at protein level"/>
<comment type="function">
    <text evidence="3 5 7">Component of the small ribosomal subunit (PubMed:23636399). The ribosome is a large ribonucleoprotein complex responsible for the synthesis of proteins in the cell (PubMed:23636399). Required for rRNA maturation (PubMed:19061985). Part of the small subunit (SSU) processome, first precursor of the small eukaryotic ribosomal subunit. During the assembly of the SSU processome in the nucleolus, many ribosome biogenesis factors, an RNA chaperone and ribosomal proteins associate with the nascent pre-rRNA and work in concert to generate RNA folding, modifications, rearrangements and cleavage as well as targeted degradation of pre-ribosomal RNA by the RNA exosome (PubMed:34516797).</text>
</comment>
<comment type="subunit">
    <text evidence="1 4 5 6 7 8">Component of the small ribosomal subunit (PubMed:23636399). Part of the small subunit (SSU) processome, composed of more than 70 proteins and the RNA chaperone small nucleolar RNA (snoRNA) U3 (PubMed:34516797). Binds IPO9 with high affinity (PubMed:11823430). Interacts with NEK6 (PubMed:20873783). Interacts with DESI2 (PubMed:28483520). Interacts with IPO5, IPO7 and KPNB1; these interactions may be involved in RPS7 nuclear import for the assembly of ribosomal subunits (PubMed:9687515).</text>
</comment>
<comment type="interaction">
    <interactant intactId="EBI-354360">
        <id>P62081</id>
    </interactant>
    <interactant intactId="EBI-389668">
        <id>Q00987</id>
        <label>MDM2</label>
    </interactant>
    <organismsDiffer>false</organismsDiffer>
    <experiments>17</experiments>
</comment>
<comment type="interaction">
    <interactant intactId="EBI-354360">
        <id>P62081</id>
    </interactant>
    <interactant intactId="EBI-716247">
        <id>Q15843</id>
        <label>NEDD8</label>
    </interactant>
    <organismsDiffer>false</organismsDiffer>
    <experiments>2</experiments>
</comment>
<comment type="interaction">
    <interactant intactId="EBI-354360">
        <id>P62081</id>
    </interactant>
    <interactant intactId="EBI-10176632">
        <id>O43829</id>
        <label>ZBTB14</label>
    </interactant>
    <organismsDiffer>false</organismsDiffer>
    <experiments>4</experiments>
</comment>
<comment type="subcellular location">
    <subcellularLocation>
        <location evidence="2 4">Cytoplasm</location>
        <location evidence="2 4">Cytoskeleton</location>
        <location evidence="2 4">Microtubule organizing center</location>
        <location evidence="2 4">Centrosome</location>
    </subcellularLocation>
    <subcellularLocation>
        <location evidence="5 8">Cytoplasm</location>
    </subcellularLocation>
    <subcellularLocation>
        <location evidence="7 8">Nucleus</location>
        <location evidence="7 8">Nucleolus</location>
    </subcellularLocation>
    <text evidence="4 8">Although RPS7 is functional within the cytoplasm, the assembly of ribosomal subunits occurs in the nucleus. RPS7 nuclear import is mediated by IPO5/RanBP5, IPO7/RanBP7, KPNB1/importin-beta or TPNO1/Trn (PubMed:9687515). Colocalizes with NEK6 in the centrosome (PubMed:20873783).</text>
</comment>
<comment type="PTM">
    <text evidence="4">Phosphorylated by NEK6.</text>
</comment>
<comment type="PTM">
    <text evidence="6">Ubiquitinated. Deubiquitinated by DESI2, leading to its stabilization.</text>
</comment>
<comment type="disease" evidence="3">
    <disease id="DI-00398">
        <name>Diamond-Blackfan anemia 8</name>
        <acronym>DBA8</acronym>
        <description>A form of Diamond-Blackfan anemia, a congenital non-regenerative hypoplastic anemia that usually presents early in infancy. Diamond-Blackfan anemia is characterized by a moderate to severe macrocytic anemia, erythroblastopenia, and an increased risk of malignancy. 30 to 40% of Diamond-Blackfan anemia patients present with short stature and congenital anomalies, the most frequent being craniofacial (Pierre-Robin syndrome and cleft palate), thumb and urogenital anomalies.</description>
        <dbReference type="MIM" id="612563"/>
    </disease>
    <text>The disease is caused by variants affecting the gene represented in this entry.</text>
</comment>
<comment type="similarity">
    <text evidence="10">Belongs to the eukaryotic ribosomal protein eS7 family.</text>
</comment>
<accession>P62081</accession>
<accession>P23821</accession>
<accession>P24818</accession>
<accession>Q57Z92</accession>
<accession>Q6IPH1</accession>
<evidence type="ECO:0000269" key="1">
    <source>
    </source>
</evidence>
<evidence type="ECO:0000269" key="2">
    <source>
    </source>
</evidence>
<evidence type="ECO:0000269" key="3">
    <source>
    </source>
</evidence>
<evidence type="ECO:0000269" key="4">
    <source>
    </source>
</evidence>
<evidence type="ECO:0000269" key="5">
    <source>
    </source>
</evidence>
<evidence type="ECO:0000269" key="6">
    <source>
    </source>
</evidence>
<evidence type="ECO:0000269" key="7">
    <source>
    </source>
</evidence>
<evidence type="ECO:0000269" key="8">
    <source>
    </source>
</evidence>
<evidence type="ECO:0000303" key="9">
    <source>
    </source>
</evidence>
<evidence type="ECO:0000305" key="10"/>
<evidence type="ECO:0000312" key="11">
    <source>
        <dbReference type="HGNC" id="HGNC:10440"/>
    </source>
</evidence>
<evidence type="ECO:0007744" key="12">
    <source>
        <dbReference type="PDB" id="7MQ8"/>
    </source>
</evidence>
<evidence type="ECO:0007744" key="13">
    <source>
        <dbReference type="PDB" id="7MQ9"/>
    </source>
</evidence>
<evidence type="ECO:0007744" key="14">
    <source>
        <dbReference type="PDB" id="7MQA"/>
    </source>
</evidence>
<evidence type="ECO:0007744" key="15">
    <source>
    </source>
</evidence>
<evidence type="ECO:0007744" key="16">
    <source>
    </source>
</evidence>
<evidence type="ECO:0007744" key="17">
    <source>
    </source>
</evidence>
<evidence type="ECO:0007829" key="18">
    <source>
        <dbReference type="PDB" id="6ZLW"/>
    </source>
</evidence>
<evidence type="ECO:0007829" key="19">
    <source>
        <dbReference type="PDB" id="6ZOJ"/>
    </source>
</evidence>
<evidence type="ECO:0007829" key="20">
    <source>
        <dbReference type="PDB" id="6ZVH"/>
    </source>
</evidence>
<evidence type="ECO:0007829" key="21">
    <source>
        <dbReference type="PDB" id="6ZXG"/>
    </source>
</evidence>
<evidence type="ECO:0007829" key="22">
    <source>
        <dbReference type="PDB" id="6ZXH"/>
    </source>
</evidence>
<evidence type="ECO:0007829" key="23">
    <source>
        <dbReference type="PDB" id="7R4X"/>
    </source>
</evidence>
<evidence type="ECO:0007829" key="24">
    <source>
        <dbReference type="PDB" id="8PPK"/>
    </source>
</evidence>
<keyword id="KW-0002">3D-structure</keyword>
<keyword id="KW-0007">Acetylation</keyword>
<keyword id="KW-0963">Cytoplasm</keyword>
<keyword id="KW-0206">Cytoskeleton</keyword>
<keyword id="KW-1024">Diamond-Blackfan anemia</keyword>
<keyword id="KW-0903">Direct protein sequencing</keyword>
<keyword id="KW-1017">Isopeptide bond</keyword>
<keyword id="KW-0539">Nucleus</keyword>
<keyword id="KW-1267">Proteomics identification</keyword>
<keyword id="KW-1185">Reference proteome</keyword>
<keyword id="KW-0687">Ribonucleoprotein</keyword>
<keyword id="KW-0689">Ribosomal protein</keyword>
<keyword id="KW-0832">Ubl conjugation</keyword>
<sequence length="194" mass="22127">MFSSSAKIVKPNGEKPDEFESGISQALLELEMNSDLKAQLRELNITAAKEIEVGGGRKAIIIFVPVPQLKSFQKIQVRLVRELEKKFSGKHVVFIAQRRILPKPTRKSRTKNKQKRPRSRTLTAVHDAILEDLVFPSEIVGKRIRVKLDGSRLIKVHLDKAQQNNVEHKVETFSGVYKKLTGKDVNFEFPEFQL</sequence>